<feature type="signal peptide" evidence="3">
    <location>
        <begin position="1"/>
        <end position="18"/>
    </location>
</feature>
<feature type="propeptide" id="PRO_0000442682" evidence="2">
    <location>
        <begin position="19"/>
        <end position="127"/>
    </location>
</feature>
<feature type="chain" id="PRO_0000028939" description="Zinc metalloproteinase dpy-31">
    <location>
        <begin position="128"/>
        <end position="592"/>
    </location>
</feature>
<feature type="domain" description="Peptidase M12A" evidence="7">
    <location>
        <begin position="127"/>
        <end position="326"/>
    </location>
</feature>
<feature type="domain" description="EGF-like" evidence="3">
    <location>
        <begin position="349"/>
        <end position="361"/>
    </location>
</feature>
<feature type="domain" description="CUB" evidence="4">
    <location>
        <begin position="371"/>
        <end position="487"/>
    </location>
</feature>
<feature type="domain" description="TSP type-1" evidence="5">
    <location>
        <begin position="490"/>
        <end position="540"/>
    </location>
</feature>
<feature type="region of interest" description="Disordered" evidence="8">
    <location>
        <begin position="22"/>
        <end position="46"/>
    </location>
</feature>
<feature type="active site" evidence="7">
    <location>
        <position position="223"/>
    </location>
</feature>
<feature type="binding site" evidence="7">
    <location>
        <position position="222"/>
    </location>
    <ligand>
        <name>Zn(2+)</name>
        <dbReference type="ChEBI" id="CHEBI:29105"/>
        <note>catalytic</note>
    </ligand>
</feature>
<feature type="binding site" evidence="7">
    <location>
        <position position="226"/>
    </location>
    <ligand>
        <name>Zn(2+)</name>
        <dbReference type="ChEBI" id="CHEBI:29105"/>
        <note>catalytic</note>
    </ligand>
</feature>
<feature type="binding site" evidence="7">
    <location>
        <position position="232"/>
    </location>
    <ligand>
        <name>Zn(2+)</name>
        <dbReference type="ChEBI" id="CHEBI:29105"/>
        <note>catalytic</note>
    </ligand>
</feature>
<feature type="glycosylation site" description="N-linked (GlcNAc...) asparagine" evidence="9 11">
    <location>
        <position position="167"/>
    </location>
</feature>
<feature type="glycosylation site" description="N-linked (GlcNAc...) asparagine" evidence="6">
    <location>
        <position position="438"/>
    </location>
</feature>
<feature type="disulfide bond" evidence="7">
    <location>
        <begin position="170"/>
        <end position="325"/>
    </location>
</feature>
<feature type="disulfide bond" evidence="7">
    <location>
        <begin position="193"/>
        <end position="214"/>
    </location>
</feature>
<feature type="disulfide bond" evidence="4">
    <location>
        <begin position="371"/>
        <end position="399"/>
    </location>
</feature>
<feature type="disulfide bond" evidence="5">
    <location>
        <begin position="502"/>
        <end position="534"/>
    </location>
</feature>
<feature type="disulfide bond" evidence="5">
    <location>
        <begin position="506"/>
        <end position="539"/>
    </location>
</feature>
<feature type="disulfide bond" evidence="5">
    <location>
        <begin position="518"/>
        <end position="524"/>
    </location>
</feature>
<feature type="mutagenesis site" description="In e2920; temperature sensitive mutant. At the permissive temperature of 15 degrees Celsius, few animals survive and are short and stouter." evidence="10">
    <original>H</original>
    <variation>Y</variation>
    <location>
        <position position="280"/>
    </location>
</feature>
<feature type="mutagenesis site" description="In ju345; temperature sensitive mutant. At the permissive temperature of 15 degrees Celsius, 80 percent of animals are viable. Severe lethality in a sqt-3 (sc8) mutant background." evidence="10">
    <original>G</original>
    <variation>E</variation>
    <location>
        <position position="339"/>
    </location>
</feature>
<feature type="mutagenesis site" description="In e2770; temperature sensitive mutant. At the permissive temperature of 15 degrees Celsius, few animals survive and are short and stouter, with impaired col-19 assembly in the alae. At the restrictive temperature of 25 degrees Celsius, embryonic lethal at the 3-fold stage with few surviving animals arresting at the L1 larval stage." evidence="10">
    <original>L</original>
    <variation>P</variation>
    <location>
        <position position="469"/>
    </location>
</feature>
<feature type="mutagenesis site" description="Partially lethal." evidence="10">
    <original>L</original>
    <variation>S</variation>
    <location>
        <position position="469"/>
    </location>
</feature>
<keyword id="KW-0165">Cleavage on pair of basic residues</keyword>
<keyword id="KW-1015">Disulfide bond</keyword>
<keyword id="KW-0245">EGF-like domain</keyword>
<keyword id="KW-0325">Glycoprotein</keyword>
<keyword id="KW-0378">Hydrolase</keyword>
<keyword id="KW-0479">Metal-binding</keyword>
<keyword id="KW-0482">Metalloprotease</keyword>
<keyword id="KW-0645">Protease</keyword>
<keyword id="KW-1185">Reference proteome</keyword>
<keyword id="KW-0964">Secreted</keyword>
<keyword id="KW-0732">Signal</keyword>
<keyword id="KW-0862">Zinc</keyword>
<keyword id="KW-0865">Zymogen</keyword>
<comment type="function">
    <text evidence="1 10">Metalloprotease which cleaves the carboxyl terminus of procollagens, such as sqt-3, to mature collagens (By similarity). Involved in cuticular collagen maturation (PubMed:15579684).</text>
</comment>
<comment type="cofactor">
    <cofactor evidence="7">
        <name>Zn(2+)</name>
        <dbReference type="ChEBI" id="CHEBI:29105"/>
    </cofactor>
    <text evidence="7">Binds 1 zinc ion per subunit.</text>
</comment>
<comment type="subcellular location">
    <subcellularLocation>
        <location evidence="15">Secreted</location>
    </subcellularLocation>
</comment>
<comment type="tissue specificity">
    <text evidence="10">Expressed in hypodermis, rectal and vulval epithelial cells and amphid socket cells.</text>
</comment>
<comment type="developmental stage">
    <text evidence="10">Expression begins at the 2-fold embryonic stage and continues throughout larval development and adulthood. In larvae, expressed in the hypodermis but not in seam cells.</text>
</comment>
<comment type="disruption phenotype">
    <text evidence="10">RNAi-mediated knockdown causes embryonic lethality in 5 percent of the progeny.</text>
</comment>
<sequence length="592" mass="67257">MHKIFIIFGLLSLCAAHSLRDLSNKDEEDPPSSAPGVRKRRMMSEEDQKTVDYYMDKLNKLADEKHPEEIERHKNPELVAWDRKRDSVLNPEEQGKFFQGDIVLYPEQAKALYEQALTEGKTRVKRKFIGSNLRRWDASRPIIYAFDGSHTQREQRIIELALEHWHNITCLNFQRNDQANSGNRIVFTDVDGCASNVGRHPLGEEQLVSLAPECIRLGVIAHEVAHALGFWHEQSRPDRDQYVTVRWENIDKDSKGQFLKEDPDDVDNAGVPYDYGSIMHYRSKAFSKFDDLYTISTYVTDYQKTIGQRDQLSFNDIRLMNKIYCSAVCPSKLPCQRGGYTDPRRCDRCRCPDGFTGQYCEQVMPGYGATCGGKISLTRSTTRISSPGYPREFKEGQECSWLLVAPPGHIVEFQFIGEFEMYCKIRHSLCMDYVEVRNSTDFANTGMRYCCYGTPPTRIRSATTDMVVLFRSFYRGGKGFEARARAVPEAGNWNSWSPWTACSATCGACGSRMRTRTCPPGNACSGEPVETQICNTQACTGMCAQKREEEGQCGGFLSLLRGVRCRQEKTVMAPCENACCPGFTLQRGRCVR</sequence>
<protein>
    <recommendedName>
        <fullName evidence="15">Zinc metalloproteinase dpy-31</fullName>
        <ecNumber evidence="1">3.4.24.-</ecNumber>
    </recommendedName>
    <alternativeName>
        <fullName evidence="12">Nematode astacin 35</fullName>
    </alternativeName>
    <alternativeName>
        <fullName evidence="13">Procollagen C-proteinase</fullName>
    </alternativeName>
    <alternativeName>
        <fullName evidence="14">Tollish protein 2</fullName>
    </alternativeName>
</protein>
<accession>P98060</accession>
<accession>Q6AHR4</accession>
<organism>
    <name type="scientific">Caenorhabditis elegans</name>
    <dbReference type="NCBI Taxonomy" id="6239"/>
    <lineage>
        <taxon>Eukaryota</taxon>
        <taxon>Metazoa</taxon>
        <taxon>Ecdysozoa</taxon>
        <taxon>Nematoda</taxon>
        <taxon>Chromadorea</taxon>
        <taxon>Rhabditida</taxon>
        <taxon>Rhabditina</taxon>
        <taxon>Rhabditomorpha</taxon>
        <taxon>Rhabditoidea</taxon>
        <taxon>Rhabditidae</taxon>
        <taxon>Peloderinae</taxon>
        <taxon>Caenorhabditis</taxon>
    </lineage>
</organism>
<dbReference type="EC" id="3.4.24.-" evidence="1"/>
<dbReference type="EMBL" id="FO081317">
    <property type="protein sequence ID" value="CCD70758.1"/>
    <property type="molecule type" value="Genomic_DNA"/>
</dbReference>
<dbReference type="RefSeq" id="NP_001022731.1">
    <property type="nucleotide sequence ID" value="NM_001027560.6"/>
</dbReference>
<dbReference type="SMR" id="P98060"/>
<dbReference type="STRING" id="6239.R151.5a.1"/>
<dbReference type="MEROPS" id="M12.321"/>
<dbReference type="GlyCosmos" id="P98060">
    <property type="glycosylation" value="2 sites, No reported glycans"/>
</dbReference>
<dbReference type="iPTMnet" id="P98060"/>
<dbReference type="PaxDb" id="6239-R151.5a"/>
<dbReference type="PeptideAtlas" id="P98060"/>
<dbReference type="EnsemblMetazoa" id="R151.5a.1">
    <property type="protein sequence ID" value="R151.5a.1"/>
    <property type="gene ID" value="WBGene00006592"/>
</dbReference>
<dbReference type="EnsemblMetazoa" id="R151.5a.2">
    <property type="protein sequence ID" value="R151.5a.2"/>
    <property type="gene ID" value="WBGene00006592"/>
</dbReference>
<dbReference type="GeneID" id="176014"/>
<dbReference type="KEGG" id="cel:CELE_R151.5"/>
<dbReference type="UCSC" id="R151.5b">
    <property type="organism name" value="c. elegans"/>
</dbReference>
<dbReference type="AGR" id="WB:WBGene00006592"/>
<dbReference type="CTD" id="176014"/>
<dbReference type="WormBase" id="R151.5a">
    <property type="protein sequence ID" value="CE27200"/>
    <property type="gene ID" value="WBGene00006592"/>
    <property type="gene designation" value="dpy-31"/>
</dbReference>
<dbReference type="eggNOG" id="KOG3714">
    <property type="taxonomic scope" value="Eukaryota"/>
</dbReference>
<dbReference type="HOGENOM" id="CLU_017286_1_3_1"/>
<dbReference type="InParanoid" id="P98060"/>
<dbReference type="OMA" id="GMRYCCY"/>
<dbReference type="OrthoDB" id="431034at2759"/>
<dbReference type="PhylomeDB" id="P98060"/>
<dbReference type="BRENDA" id="3.4.24.21">
    <property type="organism ID" value="1045"/>
</dbReference>
<dbReference type="PRO" id="PR:P98060"/>
<dbReference type="Proteomes" id="UP000001940">
    <property type="component" value="Chromosome III"/>
</dbReference>
<dbReference type="Bgee" id="WBGene00006592">
    <property type="expression patterns" value="Expressed in pharyngeal muscle cell (C elegans) and 4 other cell types or tissues"/>
</dbReference>
<dbReference type="GO" id="GO:0005576">
    <property type="term" value="C:extracellular region"/>
    <property type="evidence" value="ECO:0007669"/>
    <property type="project" value="UniProtKB-SubCell"/>
</dbReference>
<dbReference type="GO" id="GO:0004222">
    <property type="term" value="F:metalloendopeptidase activity"/>
    <property type="evidence" value="ECO:0000318"/>
    <property type="project" value="GO_Central"/>
</dbReference>
<dbReference type="GO" id="GO:0008270">
    <property type="term" value="F:zinc ion binding"/>
    <property type="evidence" value="ECO:0007669"/>
    <property type="project" value="InterPro"/>
</dbReference>
<dbReference type="GO" id="GO:0042338">
    <property type="term" value="P:cuticle development involved in collagen and cuticulin-based cuticle molting cycle"/>
    <property type="evidence" value="ECO:0000315"/>
    <property type="project" value="WormBase"/>
</dbReference>
<dbReference type="GO" id="GO:0006508">
    <property type="term" value="P:proteolysis"/>
    <property type="evidence" value="ECO:0007669"/>
    <property type="project" value="UniProtKB-KW"/>
</dbReference>
<dbReference type="CDD" id="cd00041">
    <property type="entry name" value="CUB"/>
    <property type="match status" value="1"/>
</dbReference>
<dbReference type="CDD" id="cd04280">
    <property type="entry name" value="ZnMc_astacin_like"/>
    <property type="match status" value="1"/>
</dbReference>
<dbReference type="FunFam" id="2.60.120.290:FF:000093">
    <property type="entry name" value="Zinc metalloproteinase"/>
    <property type="match status" value="1"/>
</dbReference>
<dbReference type="FunFam" id="3.40.390.10:FF:000028">
    <property type="entry name" value="Zinc metalloproteinase"/>
    <property type="match status" value="1"/>
</dbReference>
<dbReference type="FunFam" id="2.20.100.10:FF:000129">
    <property type="entry name" value="Zinc metalloproteinase dpy-31"/>
    <property type="match status" value="1"/>
</dbReference>
<dbReference type="Gene3D" id="3.40.390.10">
    <property type="entry name" value="Collagenase (Catalytic Domain)"/>
    <property type="match status" value="1"/>
</dbReference>
<dbReference type="Gene3D" id="2.60.120.290">
    <property type="entry name" value="Spermadhesin, CUB domain"/>
    <property type="match status" value="1"/>
</dbReference>
<dbReference type="Gene3D" id="2.20.100.10">
    <property type="entry name" value="Thrombospondin type-1 (TSP1) repeat"/>
    <property type="match status" value="1"/>
</dbReference>
<dbReference type="InterPro" id="IPR034035">
    <property type="entry name" value="Astacin-like_dom"/>
</dbReference>
<dbReference type="InterPro" id="IPR000859">
    <property type="entry name" value="CUB_dom"/>
</dbReference>
<dbReference type="InterPro" id="IPR000742">
    <property type="entry name" value="EGF-like_dom"/>
</dbReference>
<dbReference type="InterPro" id="IPR024079">
    <property type="entry name" value="MetalloPept_cat_dom_sf"/>
</dbReference>
<dbReference type="InterPro" id="IPR017050">
    <property type="entry name" value="Metallopeptidase_nem"/>
</dbReference>
<dbReference type="InterPro" id="IPR001506">
    <property type="entry name" value="Peptidase_M12A"/>
</dbReference>
<dbReference type="InterPro" id="IPR006026">
    <property type="entry name" value="Peptidase_Metallo"/>
</dbReference>
<dbReference type="InterPro" id="IPR035914">
    <property type="entry name" value="Sperma_CUB_dom_sf"/>
</dbReference>
<dbReference type="InterPro" id="IPR000884">
    <property type="entry name" value="TSP1_rpt"/>
</dbReference>
<dbReference type="InterPro" id="IPR036383">
    <property type="entry name" value="TSP1_rpt_sf"/>
</dbReference>
<dbReference type="PANTHER" id="PTHR10127">
    <property type="entry name" value="DISCOIDIN, CUB, EGF, LAMININ , AND ZINC METALLOPROTEASE DOMAIN CONTAINING"/>
    <property type="match status" value="1"/>
</dbReference>
<dbReference type="PANTHER" id="PTHR10127:SF813">
    <property type="entry name" value="ZINC METALLOPROTEINASE DPY-31"/>
    <property type="match status" value="1"/>
</dbReference>
<dbReference type="Pfam" id="PF01400">
    <property type="entry name" value="Astacin"/>
    <property type="match status" value="1"/>
</dbReference>
<dbReference type="Pfam" id="PF00431">
    <property type="entry name" value="CUB"/>
    <property type="match status" value="1"/>
</dbReference>
<dbReference type="Pfam" id="PF00090">
    <property type="entry name" value="TSP_1"/>
    <property type="match status" value="1"/>
</dbReference>
<dbReference type="PIRSF" id="PIRSF036365">
    <property type="entry name" value="Astacin_nematoda"/>
    <property type="match status" value="1"/>
</dbReference>
<dbReference type="PRINTS" id="PR00480">
    <property type="entry name" value="ASTACIN"/>
</dbReference>
<dbReference type="SMART" id="SM00042">
    <property type="entry name" value="CUB"/>
    <property type="match status" value="1"/>
</dbReference>
<dbReference type="SMART" id="SM00209">
    <property type="entry name" value="TSP1"/>
    <property type="match status" value="1"/>
</dbReference>
<dbReference type="SMART" id="SM00235">
    <property type="entry name" value="ZnMc"/>
    <property type="match status" value="1"/>
</dbReference>
<dbReference type="SUPFAM" id="SSF55486">
    <property type="entry name" value="Metalloproteases ('zincins'), catalytic domain"/>
    <property type="match status" value="1"/>
</dbReference>
<dbReference type="SUPFAM" id="SSF49854">
    <property type="entry name" value="Spermadhesin, CUB domain"/>
    <property type="match status" value="1"/>
</dbReference>
<dbReference type="SUPFAM" id="SSF82895">
    <property type="entry name" value="TSP-1 type 1 repeat"/>
    <property type="match status" value="1"/>
</dbReference>
<dbReference type="PROSITE" id="PS51864">
    <property type="entry name" value="ASTACIN"/>
    <property type="match status" value="1"/>
</dbReference>
<dbReference type="PROSITE" id="PS01180">
    <property type="entry name" value="CUB"/>
    <property type="match status" value="1"/>
</dbReference>
<dbReference type="PROSITE" id="PS00022">
    <property type="entry name" value="EGF_1"/>
    <property type="match status" value="1"/>
</dbReference>
<dbReference type="PROSITE" id="PS01186">
    <property type="entry name" value="EGF_2"/>
    <property type="match status" value="1"/>
</dbReference>
<dbReference type="PROSITE" id="PS50092">
    <property type="entry name" value="TSP1"/>
    <property type="match status" value="1"/>
</dbReference>
<dbReference type="PROSITE" id="PS00142">
    <property type="entry name" value="ZINC_PROTEASE"/>
    <property type="match status" value="1"/>
</dbReference>
<gene>
    <name evidence="13 16" type="primary">dpy-31</name>
    <name evidence="12" type="synonym">nas-35</name>
    <name evidence="14" type="synonym">toh-2</name>
    <name evidence="16" type="ORF">R151.5</name>
</gene>
<name>NAS35_CAEEL</name>
<reference key="1">
    <citation type="journal article" date="1998" name="Science">
        <title>Genome sequence of the nematode C. elegans: a platform for investigating biology.</title>
        <authorList>
            <consortium name="The C. elegans sequencing consortium"/>
        </authorList>
    </citation>
    <scope>NUCLEOTIDE SEQUENCE [LARGE SCALE GENOMIC DNA]</scope>
    <scope>ALTERNATIVE SPLICING</scope>
    <source>
        <strain>Bristol N2</strain>
    </source>
</reference>
<reference key="2">
    <citation type="online journal article" date="1996" name="Worm Breeder's Gazette">
        <title>Tollish genes in C. elegans.</title>
        <authorList>
            <person name="Finelli A.L."/>
            <person name="Savage C."/>
            <person name="Cho S.H."/>
            <person name="Padgett R.W."/>
        </authorList>
        <locator>14(2):46</locator>
    </citation>
    <scope>IDENTIFICATION</scope>
</reference>
<reference key="3">
    <citation type="journal article" date="2003" name="Eur. J. Biochem.">
        <title>The astacin protein family in Caenorhabditis elegans.</title>
        <authorList>
            <person name="Moehrlen F."/>
            <person name="Hutter H."/>
            <person name="Zwilling R."/>
        </authorList>
    </citation>
    <scope>IDENTIFICATION</scope>
    <scope>NOMENCLATURE</scope>
</reference>
<reference key="4">
    <citation type="journal article" date="2003" name="Nat. Biotechnol.">
        <title>Lectin affinity capture, isotope-coded tagging and mass spectrometry to identify N-linked glycoproteins.</title>
        <authorList>
            <person name="Kaji H."/>
            <person name="Saito H."/>
            <person name="Yamauchi Y."/>
            <person name="Shinkawa T."/>
            <person name="Taoka M."/>
            <person name="Hirabayashi J."/>
            <person name="Kasai K."/>
            <person name="Takahashi N."/>
            <person name="Isobe T."/>
        </authorList>
    </citation>
    <scope>GLYCOSYLATION [LARGE SCALE ANALYSIS] AT ASN-167</scope>
    <scope>IDENTIFICATION BY MASS SPECTROMETRY</scope>
    <source>
        <strain>Bristol N2</strain>
    </source>
</reference>
<reference key="5">
    <citation type="journal article" date="2004" name="Genetics">
        <title>Gene interactions in Caenorhabditis elegans define DPY-31 as a candidate procollagen C-proteinase and SQT-3/ROL-4 as its predicted major target.</title>
        <authorList>
            <person name="Novelli J."/>
            <person name="Ahmed S."/>
            <person name="Hodgkin J."/>
        </authorList>
    </citation>
    <scope>FUNCTION</scope>
    <scope>TISSUE SPECIFICITY</scope>
    <scope>DEVELOPMENTAL STAGE</scope>
    <scope>DISRUPTION PHENOTYPE</scope>
    <scope>MUTAGENESIS OF HIS-280; GLY-339 AND LEU-469</scope>
</reference>
<reference key="6">
    <citation type="journal article" date="2007" name="Mol. Cell. Proteomics">
        <title>Proteomics reveals N-linked glycoprotein diversity in Caenorhabditis elegans and suggests an atypical translocation mechanism for integral membrane proteins.</title>
        <authorList>
            <person name="Kaji H."/>
            <person name="Kamiie J."/>
            <person name="Kawakami H."/>
            <person name="Kido K."/>
            <person name="Yamauchi Y."/>
            <person name="Shinkawa T."/>
            <person name="Taoka M."/>
            <person name="Takahashi N."/>
            <person name="Isobe T."/>
        </authorList>
    </citation>
    <scope>GLYCOSYLATION [LARGE SCALE ANALYSIS] AT ASN-167</scope>
    <scope>IDENTIFICATION BY MASS SPECTROMETRY</scope>
    <source>
        <strain>Bristol N2</strain>
    </source>
</reference>
<evidence type="ECO:0000250" key="1">
    <source>
        <dbReference type="UniProtKB" id="A8Q2D1"/>
    </source>
</evidence>
<evidence type="ECO:0000250" key="2">
    <source>
        <dbReference type="UniProtKB" id="P13497"/>
    </source>
</evidence>
<evidence type="ECO:0000255" key="3"/>
<evidence type="ECO:0000255" key="4">
    <source>
        <dbReference type="PROSITE-ProRule" id="PRU00059"/>
    </source>
</evidence>
<evidence type="ECO:0000255" key="5">
    <source>
        <dbReference type="PROSITE-ProRule" id="PRU00210"/>
    </source>
</evidence>
<evidence type="ECO:0000255" key="6">
    <source>
        <dbReference type="PROSITE-ProRule" id="PRU00498"/>
    </source>
</evidence>
<evidence type="ECO:0000255" key="7">
    <source>
        <dbReference type="PROSITE-ProRule" id="PRU01211"/>
    </source>
</evidence>
<evidence type="ECO:0000256" key="8">
    <source>
        <dbReference type="SAM" id="MobiDB-lite"/>
    </source>
</evidence>
<evidence type="ECO:0000269" key="9">
    <source>
    </source>
</evidence>
<evidence type="ECO:0000269" key="10">
    <source>
    </source>
</evidence>
<evidence type="ECO:0000269" key="11">
    <source>
    </source>
</evidence>
<evidence type="ECO:0000303" key="12">
    <source>
    </source>
</evidence>
<evidence type="ECO:0000303" key="13">
    <source>
    </source>
</evidence>
<evidence type="ECO:0000303" key="14">
    <source ref="2"/>
</evidence>
<evidence type="ECO:0000305" key="15"/>
<evidence type="ECO:0000312" key="16">
    <source>
        <dbReference type="WormBase" id="R151.5a"/>
    </source>
</evidence>
<proteinExistence type="evidence at protein level"/>